<protein>
    <recommendedName>
        <fullName evidence="1">Threonine--tRNA ligase</fullName>
        <ecNumber evidence="1">6.1.1.3</ecNumber>
    </recommendedName>
    <alternativeName>
        <fullName evidence="1">Threonyl-tRNA synthetase</fullName>
        <shortName evidence="1">ThrRS</shortName>
    </alternativeName>
</protein>
<reference key="1">
    <citation type="journal article" date="2007" name="Proc. Natl. Acad. Sci. U.S.A.">
        <title>Deep-sea vent epsilon-proteobacterial genomes provide insights into emergence of pathogens.</title>
        <authorList>
            <person name="Nakagawa S."/>
            <person name="Takaki Y."/>
            <person name="Shimamura S."/>
            <person name="Reysenbach A.-L."/>
            <person name="Takai K."/>
            <person name="Horikoshi K."/>
        </authorList>
    </citation>
    <scope>NUCLEOTIDE SEQUENCE [LARGE SCALE GENOMIC DNA]</scope>
    <source>
        <strain>NBC37-1</strain>
    </source>
</reference>
<gene>
    <name evidence="1" type="primary">thrS</name>
    <name type="ordered locus">SUN_2425</name>
</gene>
<organism>
    <name type="scientific">Sulfurovum sp. (strain NBC37-1)</name>
    <dbReference type="NCBI Taxonomy" id="387093"/>
    <lineage>
        <taxon>Bacteria</taxon>
        <taxon>Pseudomonadati</taxon>
        <taxon>Campylobacterota</taxon>
        <taxon>Epsilonproteobacteria</taxon>
        <taxon>Campylobacterales</taxon>
        <taxon>Sulfurovaceae</taxon>
        <taxon>Sulfurovum</taxon>
    </lineage>
</organism>
<accession>A6QD00</accession>
<name>SYT_SULNB</name>
<sequence length="604" mass="69540">MSENLIGYIDDQGNIIDTQSAGENCTARPIEFDNSEKSLEIIRHSTAHLMAQAIKELYPDAQFFVGPVVDEGFYYDFRVNEKIGEEDLKTIEKKMKELIKKKYKIEKYEISKDEALKKFANDDLKQAVLSRIPDETVSIYKQGDFEDLCRGPHVPALRFLHNFKLTRVAGAYLGGDENAEMLTRIYGIAFADKESLKSYLKMMEEAKKRDHRKIGTEMELFMFNEESGAGLPFWMPQGAKLRYKLEQILHKAHLVRDYEPVRGPEILKADMWRTSGHYACYGENMYLTEIDGQEYGIKPMNCIGHIQIFKQTQKSYRDLPVKYYEYGVVHRHEKSGVLHGLLRVREFTQDDAHIFCAPEQIASEVLEVVEFVDSVMKLFEFEYTMEISTKPEKAIGDDEVWETATQGLKDALKGNDLPYTIDEGGGAFYGPKIDIKITDAIGRKWQCGTIQVDFNLPERFDVEYVAEDNSRKRPVMLHRAILGSFERFIGILTEHYAGEFPFFIAPTQVIFVPISEGHAGYAYGLKKKLMLEGIDSEVSDKNDSLNKRIRTAEKQRVPYVVIIGDEEVQNNTVAIRNRRTREQYNLTQDEFMVELTKQLQEGKI</sequence>
<evidence type="ECO:0000255" key="1">
    <source>
        <dbReference type="HAMAP-Rule" id="MF_00184"/>
    </source>
</evidence>
<dbReference type="EC" id="6.1.1.3" evidence="1"/>
<dbReference type="EMBL" id="AP009179">
    <property type="protein sequence ID" value="BAF73359.1"/>
    <property type="molecule type" value="Genomic_DNA"/>
</dbReference>
<dbReference type="RefSeq" id="WP_012084203.1">
    <property type="nucleotide sequence ID" value="NC_009663.1"/>
</dbReference>
<dbReference type="SMR" id="A6QD00"/>
<dbReference type="STRING" id="387093.SUN_2425"/>
<dbReference type="KEGG" id="sun:SUN_2425"/>
<dbReference type="eggNOG" id="COG0441">
    <property type="taxonomic scope" value="Bacteria"/>
</dbReference>
<dbReference type="HOGENOM" id="CLU_008554_0_1_7"/>
<dbReference type="OrthoDB" id="9802304at2"/>
<dbReference type="Proteomes" id="UP000006378">
    <property type="component" value="Chromosome"/>
</dbReference>
<dbReference type="GO" id="GO:0005829">
    <property type="term" value="C:cytosol"/>
    <property type="evidence" value="ECO:0007669"/>
    <property type="project" value="TreeGrafter"/>
</dbReference>
<dbReference type="GO" id="GO:0005524">
    <property type="term" value="F:ATP binding"/>
    <property type="evidence" value="ECO:0007669"/>
    <property type="project" value="UniProtKB-UniRule"/>
</dbReference>
<dbReference type="GO" id="GO:0046872">
    <property type="term" value="F:metal ion binding"/>
    <property type="evidence" value="ECO:0007669"/>
    <property type="project" value="UniProtKB-KW"/>
</dbReference>
<dbReference type="GO" id="GO:0004829">
    <property type="term" value="F:threonine-tRNA ligase activity"/>
    <property type="evidence" value="ECO:0007669"/>
    <property type="project" value="UniProtKB-UniRule"/>
</dbReference>
<dbReference type="GO" id="GO:0000049">
    <property type="term" value="F:tRNA binding"/>
    <property type="evidence" value="ECO:0007669"/>
    <property type="project" value="UniProtKB-KW"/>
</dbReference>
<dbReference type="GO" id="GO:0006435">
    <property type="term" value="P:threonyl-tRNA aminoacylation"/>
    <property type="evidence" value="ECO:0007669"/>
    <property type="project" value="UniProtKB-UniRule"/>
</dbReference>
<dbReference type="CDD" id="cd00860">
    <property type="entry name" value="ThrRS_anticodon"/>
    <property type="match status" value="1"/>
</dbReference>
<dbReference type="CDD" id="cd00771">
    <property type="entry name" value="ThrRS_core"/>
    <property type="match status" value="1"/>
</dbReference>
<dbReference type="FunFam" id="3.30.930.10:FF:000002">
    <property type="entry name" value="Threonine--tRNA ligase"/>
    <property type="match status" value="1"/>
</dbReference>
<dbReference type="FunFam" id="3.40.50.800:FF:000001">
    <property type="entry name" value="Threonine--tRNA ligase"/>
    <property type="match status" value="1"/>
</dbReference>
<dbReference type="FunFam" id="3.30.980.10:FF:000005">
    <property type="entry name" value="Threonyl-tRNA synthetase, mitochondrial"/>
    <property type="match status" value="1"/>
</dbReference>
<dbReference type="Gene3D" id="3.30.54.20">
    <property type="match status" value="1"/>
</dbReference>
<dbReference type="Gene3D" id="3.40.50.800">
    <property type="entry name" value="Anticodon-binding domain"/>
    <property type="match status" value="1"/>
</dbReference>
<dbReference type="Gene3D" id="3.30.930.10">
    <property type="entry name" value="Bira Bifunctional Protein, Domain 2"/>
    <property type="match status" value="1"/>
</dbReference>
<dbReference type="Gene3D" id="3.30.980.10">
    <property type="entry name" value="Threonyl-trna Synthetase, Chain A, domain 2"/>
    <property type="match status" value="1"/>
</dbReference>
<dbReference type="HAMAP" id="MF_00184">
    <property type="entry name" value="Thr_tRNA_synth"/>
    <property type="match status" value="1"/>
</dbReference>
<dbReference type="InterPro" id="IPR002314">
    <property type="entry name" value="aa-tRNA-synt_IIb"/>
</dbReference>
<dbReference type="InterPro" id="IPR006195">
    <property type="entry name" value="aa-tRNA-synth_II"/>
</dbReference>
<dbReference type="InterPro" id="IPR045864">
    <property type="entry name" value="aa-tRNA-synth_II/BPL/LPL"/>
</dbReference>
<dbReference type="InterPro" id="IPR004154">
    <property type="entry name" value="Anticodon-bd"/>
</dbReference>
<dbReference type="InterPro" id="IPR036621">
    <property type="entry name" value="Anticodon-bd_dom_sf"/>
</dbReference>
<dbReference type="InterPro" id="IPR002320">
    <property type="entry name" value="Thr-tRNA-ligase_IIa"/>
</dbReference>
<dbReference type="InterPro" id="IPR018163">
    <property type="entry name" value="Thr/Ala-tRNA-synth_IIc_edit"/>
</dbReference>
<dbReference type="InterPro" id="IPR047246">
    <property type="entry name" value="ThrRS_anticodon"/>
</dbReference>
<dbReference type="InterPro" id="IPR033728">
    <property type="entry name" value="ThrRS_core"/>
</dbReference>
<dbReference type="InterPro" id="IPR012947">
    <property type="entry name" value="tRNA_SAD"/>
</dbReference>
<dbReference type="NCBIfam" id="TIGR00418">
    <property type="entry name" value="thrS"/>
    <property type="match status" value="1"/>
</dbReference>
<dbReference type="PANTHER" id="PTHR11451:SF44">
    <property type="entry name" value="THREONINE--TRNA LIGASE, CHLOROPLASTIC_MITOCHONDRIAL 2"/>
    <property type="match status" value="1"/>
</dbReference>
<dbReference type="PANTHER" id="PTHR11451">
    <property type="entry name" value="THREONINE-TRNA LIGASE"/>
    <property type="match status" value="1"/>
</dbReference>
<dbReference type="Pfam" id="PF03129">
    <property type="entry name" value="HGTP_anticodon"/>
    <property type="match status" value="1"/>
</dbReference>
<dbReference type="Pfam" id="PF00587">
    <property type="entry name" value="tRNA-synt_2b"/>
    <property type="match status" value="1"/>
</dbReference>
<dbReference type="Pfam" id="PF07973">
    <property type="entry name" value="tRNA_SAD"/>
    <property type="match status" value="1"/>
</dbReference>
<dbReference type="PRINTS" id="PR01047">
    <property type="entry name" value="TRNASYNTHTHR"/>
</dbReference>
<dbReference type="SMART" id="SM00863">
    <property type="entry name" value="tRNA_SAD"/>
    <property type="match status" value="1"/>
</dbReference>
<dbReference type="SUPFAM" id="SSF52954">
    <property type="entry name" value="Class II aaRS ABD-related"/>
    <property type="match status" value="1"/>
</dbReference>
<dbReference type="SUPFAM" id="SSF55681">
    <property type="entry name" value="Class II aaRS and biotin synthetases"/>
    <property type="match status" value="1"/>
</dbReference>
<dbReference type="SUPFAM" id="SSF55186">
    <property type="entry name" value="ThrRS/AlaRS common domain"/>
    <property type="match status" value="1"/>
</dbReference>
<dbReference type="PROSITE" id="PS50862">
    <property type="entry name" value="AA_TRNA_LIGASE_II"/>
    <property type="match status" value="1"/>
</dbReference>
<feature type="chain" id="PRO_1000020537" description="Threonine--tRNA ligase">
    <location>
        <begin position="1"/>
        <end position="604"/>
    </location>
</feature>
<feature type="region of interest" description="Catalytic" evidence="1">
    <location>
        <begin position="210"/>
        <end position="501"/>
    </location>
</feature>
<feature type="binding site" evidence="1">
    <location>
        <position position="302"/>
    </location>
    <ligand>
        <name>Zn(2+)</name>
        <dbReference type="ChEBI" id="CHEBI:29105"/>
    </ligand>
</feature>
<feature type="binding site" evidence="1">
    <location>
        <position position="353"/>
    </location>
    <ligand>
        <name>Zn(2+)</name>
        <dbReference type="ChEBI" id="CHEBI:29105"/>
    </ligand>
</feature>
<feature type="binding site" evidence="1">
    <location>
        <position position="478"/>
    </location>
    <ligand>
        <name>Zn(2+)</name>
        <dbReference type="ChEBI" id="CHEBI:29105"/>
    </ligand>
</feature>
<proteinExistence type="inferred from homology"/>
<keyword id="KW-0030">Aminoacyl-tRNA synthetase</keyword>
<keyword id="KW-0067">ATP-binding</keyword>
<keyword id="KW-0963">Cytoplasm</keyword>
<keyword id="KW-0436">Ligase</keyword>
<keyword id="KW-0479">Metal-binding</keyword>
<keyword id="KW-0547">Nucleotide-binding</keyword>
<keyword id="KW-0648">Protein biosynthesis</keyword>
<keyword id="KW-0694">RNA-binding</keyword>
<keyword id="KW-0820">tRNA-binding</keyword>
<keyword id="KW-0862">Zinc</keyword>
<comment type="function">
    <text evidence="1">Catalyzes the attachment of threonine to tRNA(Thr) in a two-step reaction: L-threonine is first activated by ATP to form Thr-AMP and then transferred to the acceptor end of tRNA(Thr). Also edits incorrectly charged L-seryl-tRNA(Thr).</text>
</comment>
<comment type="catalytic activity">
    <reaction evidence="1">
        <text>tRNA(Thr) + L-threonine + ATP = L-threonyl-tRNA(Thr) + AMP + diphosphate + H(+)</text>
        <dbReference type="Rhea" id="RHEA:24624"/>
        <dbReference type="Rhea" id="RHEA-COMP:9670"/>
        <dbReference type="Rhea" id="RHEA-COMP:9704"/>
        <dbReference type="ChEBI" id="CHEBI:15378"/>
        <dbReference type="ChEBI" id="CHEBI:30616"/>
        <dbReference type="ChEBI" id="CHEBI:33019"/>
        <dbReference type="ChEBI" id="CHEBI:57926"/>
        <dbReference type="ChEBI" id="CHEBI:78442"/>
        <dbReference type="ChEBI" id="CHEBI:78534"/>
        <dbReference type="ChEBI" id="CHEBI:456215"/>
        <dbReference type="EC" id="6.1.1.3"/>
    </reaction>
</comment>
<comment type="cofactor">
    <cofactor evidence="1">
        <name>Zn(2+)</name>
        <dbReference type="ChEBI" id="CHEBI:29105"/>
    </cofactor>
    <text evidence="1">Binds 1 zinc ion per subunit.</text>
</comment>
<comment type="subunit">
    <text evidence="1">Homodimer.</text>
</comment>
<comment type="subcellular location">
    <subcellularLocation>
        <location evidence="1">Cytoplasm</location>
    </subcellularLocation>
</comment>
<comment type="similarity">
    <text evidence="1">Belongs to the class-II aminoacyl-tRNA synthetase family.</text>
</comment>